<organism>
    <name type="scientific">Methanobrevibacter ruminantium (strain ATCC 35063 / DSM 1093 / JCM 13430 / OCM 146 / M1)</name>
    <name type="common">Methanobacterium ruminantium</name>
    <dbReference type="NCBI Taxonomy" id="634498"/>
    <lineage>
        <taxon>Archaea</taxon>
        <taxon>Methanobacteriati</taxon>
        <taxon>Methanobacteriota</taxon>
        <taxon>Methanomada group</taxon>
        <taxon>Methanobacteria</taxon>
        <taxon>Methanobacteriales</taxon>
        <taxon>Methanobacteriaceae</taxon>
        <taxon>Methanobrevibacter</taxon>
    </lineage>
</organism>
<protein>
    <recommendedName>
        <fullName evidence="1">2-phospho-L-lactate guanylyltransferase</fullName>
        <shortName evidence="1">LP guanylyltransferase</shortName>
        <ecNumber evidence="1">2.7.7.68</ecNumber>
    </recommendedName>
</protein>
<keyword id="KW-0342">GTP-binding</keyword>
<keyword id="KW-0547">Nucleotide-binding</keyword>
<keyword id="KW-0548">Nucleotidyltransferase</keyword>
<keyword id="KW-0808">Transferase</keyword>
<evidence type="ECO:0000255" key="1">
    <source>
        <dbReference type="HAMAP-Rule" id="MF_02114"/>
    </source>
</evidence>
<name>COFC_METRM</name>
<comment type="function">
    <text evidence="1">Guanylyltransferase that catalyzes the activation of (2S)-2-phospholactate (2-PL) as (2S)-lactyl-2-diphospho-5'-guanosine, via the condensation of 2-PL with GTP. It is involved in the biosynthesis of coenzyme F420, a hydride carrier cofactor.</text>
</comment>
<comment type="catalytic activity">
    <reaction evidence="1">
        <text>(2S)-2-phospholactate + GTP + H(+) = (2S)-lactyl-2-diphospho-5'-guanosine + diphosphate</text>
        <dbReference type="Rhea" id="RHEA:63424"/>
        <dbReference type="ChEBI" id="CHEBI:15378"/>
        <dbReference type="ChEBI" id="CHEBI:33019"/>
        <dbReference type="ChEBI" id="CHEBI:37565"/>
        <dbReference type="ChEBI" id="CHEBI:59435"/>
        <dbReference type="ChEBI" id="CHEBI:59906"/>
        <dbReference type="EC" id="2.7.7.68"/>
    </reaction>
</comment>
<comment type="pathway">
    <text evidence="1">Cofactor biosynthesis; coenzyme F420 biosynthesis.</text>
</comment>
<comment type="subunit">
    <text evidence="1">Homodimer.</text>
</comment>
<comment type="similarity">
    <text evidence="1">Belongs to the CofC family.</text>
</comment>
<gene>
    <name evidence="1" type="primary">cofC</name>
    <name type="ordered locus">mru_0953</name>
</gene>
<sequence>MDKIYAIIPVNQFANAKTRLSPFLTPEERRDLLKAMLKDITDTLKPIVDKVVIISRDEEVLAYAEELELTTIVEEEYKKSKAVNSSDDNPLNKALKQAMKWSRKKTRKVIILPSDIPLIGKTNVKLLIDQAKNFDFIIVPSKGGGTNTLIIKPLAIDMKFEGFSFNKHIEEAKRKKLVPIVHDSFYMALDVNTTEDLGEIMLHGNGTETKKYLESLGIKVESSHDHERLKVTRD</sequence>
<dbReference type="EC" id="2.7.7.68" evidence="1"/>
<dbReference type="EMBL" id="CP001719">
    <property type="protein sequence ID" value="ADC46804.1"/>
    <property type="molecule type" value="Genomic_DNA"/>
</dbReference>
<dbReference type="RefSeq" id="WP_012955755.1">
    <property type="nucleotide sequence ID" value="NC_013790.1"/>
</dbReference>
<dbReference type="SMR" id="D3E2P3"/>
<dbReference type="STRING" id="634498.mru_0953"/>
<dbReference type="GeneID" id="8770605"/>
<dbReference type="KEGG" id="mru:mru_0953"/>
<dbReference type="PATRIC" id="fig|634498.28.peg.955"/>
<dbReference type="eggNOG" id="arCOG04472">
    <property type="taxonomic scope" value="Archaea"/>
</dbReference>
<dbReference type="HOGENOM" id="CLU_076569_2_0_2"/>
<dbReference type="OrthoDB" id="11179at2157"/>
<dbReference type="UniPathway" id="UPA00071"/>
<dbReference type="Proteomes" id="UP000008680">
    <property type="component" value="Chromosome"/>
</dbReference>
<dbReference type="GO" id="GO:0005525">
    <property type="term" value="F:GTP binding"/>
    <property type="evidence" value="ECO:0007669"/>
    <property type="project" value="UniProtKB-KW"/>
</dbReference>
<dbReference type="GO" id="GO:0043814">
    <property type="term" value="F:phospholactate guanylyltransferase activity"/>
    <property type="evidence" value="ECO:0007669"/>
    <property type="project" value="UniProtKB-EC"/>
</dbReference>
<dbReference type="GO" id="GO:0052645">
    <property type="term" value="P:F420-0 metabolic process"/>
    <property type="evidence" value="ECO:0007669"/>
    <property type="project" value="UniProtKB-UniRule"/>
</dbReference>
<dbReference type="Gene3D" id="3.90.550.10">
    <property type="entry name" value="Spore Coat Polysaccharide Biosynthesis Protein SpsA, Chain A"/>
    <property type="match status" value="1"/>
</dbReference>
<dbReference type="HAMAP" id="MF_02114">
    <property type="entry name" value="CofC"/>
    <property type="match status" value="1"/>
</dbReference>
<dbReference type="InterPro" id="IPR002835">
    <property type="entry name" value="CofC"/>
</dbReference>
<dbReference type="InterPro" id="IPR029044">
    <property type="entry name" value="Nucleotide-diphossugar_trans"/>
</dbReference>
<dbReference type="NCBIfam" id="TIGR03552">
    <property type="entry name" value="F420_cofC"/>
    <property type="match status" value="1"/>
</dbReference>
<dbReference type="PANTHER" id="PTHR40392">
    <property type="entry name" value="2-PHOSPHO-L-LACTATE GUANYLYLTRANSFERASE"/>
    <property type="match status" value="1"/>
</dbReference>
<dbReference type="PANTHER" id="PTHR40392:SF1">
    <property type="entry name" value="2-PHOSPHO-L-LACTATE GUANYLYLTRANSFERASE"/>
    <property type="match status" value="1"/>
</dbReference>
<dbReference type="Pfam" id="PF01983">
    <property type="entry name" value="CofC"/>
    <property type="match status" value="1"/>
</dbReference>
<dbReference type="SUPFAM" id="SSF53448">
    <property type="entry name" value="Nucleotide-diphospho-sugar transferases"/>
    <property type="match status" value="1"/>
</dbReference>
<proteinExistence type="inferred from homology"/>
<accession>D3E2P3</accession>
<reference key="1">
    <citation type="journal article" date="2010" name="PLoS ONE">
        <title>The genome sequence of the rumen methanogen Methanobrevibacter ruminantium reveals new possibilities for controlling ruminant methane emissions.</title>
        <authorList>
            <person name="Leahy S.C."/>
            <person name="Kelly W.J."/>
            <person name="Altermann E."/>
            <person name="Ronimus R.S."/>
            <person name="Yeoman C.J."/>
            <person name="Pacheco D.M."/>
            <person name="Li D."/>
            <person name="Kong Z."/>
            <person name="McTavish S."/>
            <person name="Sang C."/>
            <person name="Lambie S.C."/>
            <person name="Janssen P.H."/>
            <person name="Dey D."/>
            <person name="Attwood G.T."/>
        </authorList>
    </citation>
    <scope>NUCLEOTIDE SEQUENCE [LARGE SCALE GENOMIC DNA]</scope>
    <source>
        <strain>ATCC 35063 / DSM 1093 / JCM 13430 / OCM 146 / M1</strain>
    </source>
</reference>
<feature type="chain" id="PRO_0000398735" description="2-phospho-L-lactate guanylyltransferase">
    <location>
        <begin position="1"/>
        <end position="234"/>
    </location>
</feature>